<proteinExistence type="inferred from homology"/>
<organism>
    <name type="scientific">Escherichia coli (strain K12)</name>
    <dbReference type="NCBI Taxonomy" id="83333"/>
    <lineage>
        <taxon>Bacteria</taxon>
        <taxon>Pseudomonadati</taxon>
        <taxon>Pseudomonadota</taxon>
        <taxon>Gammaproteobacteria</taxon>
        <taxon>Enterobacterales</taxon>
        <taxon>Enterobacteriaceae</taxon>
        <taxon>Escherichia</taxon>
    </lineage>
</organism>
<reference key="1">
    <citation type="journal article" date="1997" name="Science">
        <title>The complete genome sequence of Escherichia coli K-12.</title>
        <authorList>
            <person name="Blattner F.R."/>
            <person name="Plunkett G. III"/>
            <person name="Bloch C.A."/>
            <person name="Perna N.T."/>
            <person name="Burland V."/>
            <person name="Riley M."/>
            <person name="Collado-Vides J."/>
            <person name="Glasner J.D."/>
            <person name="Rode C.K."/>
            <person name="Mayhew G.F."/>
            <person name="Gregor J."/>
            <person name="Davis N.W."/>
            <person name="Kirkpatrick H.A."/>
            <person name="Goeden M.A."/>
            <person name="Rose D.J."/>
            <person name="Mau B."/>
            <person name="Shao Y."/>
        </authorList>
    </citation>
    <scope>NUCLEOTIDE SEQUENCE [LARGE SCALE GENOMIC DNA]</scope>
    <source>
        <strain>K12 / MG1655 / ATCC 47076</strain>
    </source>
</reference>
<reference key="2">
    <citation type="journal article" date="2006" name="Mol. Syst. Biol.">
        <title>Highly accurate genome sequences of Escherichia coli K-12 strains MG1655 and W3110.</title>
        <authorList>
            <person name="Hayashi K."/>
            <person name="Morooka N."/>
            <person name="Yamamoto Y."/>
            <person name="Fujita K."/>
            <person name="Isono K."/>
            <person name="Choi S."/>
            <person name="Ohtsubo E."/>
            <person name="Baba T."/>
            <person name="Wanner B.L."/>
            <person name="Mori H."/>
            <person name="Horiuchi T."/>
        </authorList>
    </citation>
    <scope>NUCLEOTIDE SEQUENCE [LARGE SCALE GENOMIC DNA]</scope>
    <source>
        <strain>K12 / W3110 / ATCC 27325 / DSM 5911</strain>
    </source>
</reference>
<evidence type="ECO:0000305" key="1"/>
<dbReference type="EMBL" id="U18997">
    <property type="protein sequence ID" value="AAA58151.1"/>
    <property type="molecule type" value="Genomic_DNA"/>
</dbReference>
<dbReference type="EMBL" id="U00096">
    <property type="protein sequence ID" value="AAC76379.1"/>
    <property type="molecule type" value="Genomic_DNA"/>
</dbReference>
<dbReference type="EMBL" id="AP009048">
    <property type="protein sequence ID" value="BAE77936.1"/>
    <property type="molecule type" value="Genomic_DNA"/>
</dbReference>
<dbReference type="PIR" id="E65129">
    <property type="entry name" value="E65129"/>
</dbReference>
<dbReference type="RefSeq" id="NP_417813.1">
    <property type="nucleotide sequence ID" value="NC_000913.3"/>
</dbReference>
<dbReference type="RefSeq" id="WP_000907085.1">
    <property type="nucleotide sequence ID" value="NZ_STEB01000004.1"/>
</dbReference>
<dbReference type="SMR" id="P67624"/>
<dbReference type="BioGRID" id="4263146">
    <property type="interactions" value="14"/>
</dbReference>
<dbReference type="FunCoup" id="P67624">
    <property type="interactions" value="29"/>
</dbReference>
<dbReference type="IntAct" id="P67624">
    <property type="interactions" value="7"/>
</dbReference>
<dbReference type="STRING" id="511145.b3354"/>
<dbReference type="jPOST" id="P67624"/>
<dbReference type="PaxDb" id="511145-b3354"/>
<dbReference type="EnsemblBacteria" id="AAC76379">
    <property type="protein sequence ID" value="AAC76379"/>
    <property type="gene ID" value="b3354"/>
</dbReference>
<dbReference type="GeneID" id="947863"/>
<dbReference type="KEGG" id="ecj:JW3317"/>
<dbReference type="KEGG" id="eco:b3354"/>
<dbReference type="KEGG" id="ecoc:C3026_18215"/>
<dbReference type="PATRIC" id="fig|511145.12.peg.3448"/>
<dbReference type="EchoBASE" id="EB2742"/>
<dbReference type="eggNOG" id="COG3089">
    <property type="taxonomic scope" value="Bacteria"/>
</dbReference>
<dbReference type="HOGENOM" id="CLU_186759_1_0_6"/>
<dbReference type="InParanoid" id="P67624"/>
<dbReference type="OMA" id="MIIPWKE"/>
<dbReference type="OrthoDB" id="6120729at2"/>
<dbReference type="PhylomeDB" id="P67624"/>
<dbReference type="BioCyc" id="EcoCyc:G7719-MONOMER"/>
<dbReference type="PRO" id="PR:P67624"/>
<dbReference type="Proteomes" id="UP000000625">
    <property type="component" value="Chromosome"/>
</dbReference>
<dbReference type="Gene3D" id="1.10.10.610">
    <property type="entry name" value="YehU-like"/>
    <property type="match status" value="1"/>
</dbReference>
<dbReference type="HAMAP" id="MF_00690">
    <property type="entry name" value="UPF0270"/>
    <property type="match status" value="1"/>
</dbReference>
<dbReference type="InterPro" id="IPR010648">
    <property type="entry name" value="UPF0270"/>
</dbReference>
<dbReference type="InterPro" id="IPR036685">
    <property type="entry name" value="YehU-like_sf"/>
</dbReference>
<dbReference type="NCBIfam" id="NF003438">
    <property type="entry name" value="PRK04966.1"/>
    <property type="match status" value="1"/>
</dbReference>
<dbReference type="Pfam" id="PF06794">
    <property type="entry name" value="UPF0270"/>
    <property type="match status" value="1"/>
</dbReference>
<dbReference type="PIRSF" id="PIRSF006169">
    <property type="entry name" value="UCP006169"/>
    <property type="match status" value="1"/>
</dbReference>
<dbReference type="SUPFAM" id="SSF118001">
    <property type="entry name" value="YehU-like"/>
    <property type="match status" value="1"/>
</dbReference>
<protein>
    <recommendedName>
        <fullName>UPF0270 protein YheU</fullName>
    </recommendedName>
</protein>
<comment type="similarity">
    <text evidence="1">Belongs to the UPF0270 family.</text>
</comment>
<name>YHEU_ECOLI</name>
<keyword id="KW-1185">Reference proteome</keyword>
<feature type="chain" id="PRO_0000214847" description="UPF0270 protein YheU">
    <location>
        <begin position="1"/>
        <end position="72"/>
    </location>
</feature>
<gene>
    <name type="primary">yheU</name>
    <name type="ordered locus">b3354</name>
    <name type="ordered locus">JW3317</name>
</gene>
<accession>P67624</accession>
<accession>P45536</accession>
<accession>Q2M720</accession>
<sequence length="72" mass="8470">MLIPWQDLSPETLENLIESFVLREGTDYGEHERTLEQKVADVKRQLQCGEAVLVWSELHETVNIMPRSQFRE</sequence>